<dbReference type="EMBL" id="M36999">
    <property type="protein sequence ID" value="AAA34272.1"/>
    <property type="molecule type" value="Genomic_DNA"/>
</dbReference>
<dbReference type="PIR" id="JA0153">
    <property type="entry name" value="JA0153"/>
</dbReference>
<dbReference type="STRING" id="4565.P21292"/>
<dbReference type="Allergome" id="3678">
    <property type="allergen name" value="Tri a 20"/>
</dbReference>
<dbReference type="EnsemblPlants" id="TraesARI1B03G00186910.1">
    <property type="protein sequence ID" value="TraesARI1B03G00186910.1.CDS1"/>
    <property type="gene ID" value="TraesARI1B03G00186910"/>
</dbReference>
<dbReference type="EnsemblPlants" id="TraesCLE_scaffold_118054_01G000300.1">
    <property type="protein sequence ID" value="TraesCLE_scaffold_118054_01G000300.1"/>
    <property type="gene ID" value="TraesCLE_scaffold_118054_01G000300"/>
</dbReference>
<dbReference type="EnsemblPlants" id="TraesLDM1B03G00184580.1">
    <property type="protein sequence ID" value="TraesLDM1B03G00184580.1.CDS1"/>
    <property type="gene ID" value="TraesLDM1B03G00184580"/>
</dbReference>
<dbReference type="EnsemblPlants" id="TraesPARA_EIv1.0_0104410.1">
    <property type="protein sequence ID" value="TraesPARA_EIv1.0_0104410.1.CDS1"/>
    <property type="gene ID" value="TraesPARA_EIv1.0_0104410"/>
</dbReference>
<dbReference type="EnsemblPlants" id="TraesROB_scaffold_021975_01G000300.1">
    <property type="protein sequence ID" value="TraesROB_scaffold_021975_01G000300.1"/>
    <property type="gene ID" value="TraesROB_scaffold_021975_01G000300"/>
</dbReference>
<dbReference type="EnsemblPlants" id="TraesSTA1B03G00182970.1">
    <property type="protein sequence ID" value="TraesSTA1B03G00182970.1.CDS1"/>
    <property type="gene ID" value="TraesSTA1B03G00182970"/>
</dbReference>
<dbReference type="EnsemblPlants" id="TraesSYM1B03G00188620.1">
    <property type="protein sequence ID" value="TraesSYM1B03G00188620.1.CDS1"/>
    <property type="gene ID" value="TraesSYM1B03G00188620"/>
</dbReference>
<dbReference type="Gramene" id="TraesARI1B03G00186910.1">
    <property type="protein sequence ID" value="TraesARI1B03G00186910.1.CDS1"/>
    <property type="gene ID" value="TraesARI1B03G00186910"/>
</dbReference>
<dbReference type="Gramene" id="TraesCLE_scaffold_118054_01G000300.1">
    <property type="protein sequence ID" value="TraesCLE_scaffold_118054_01G000300.1"/>
    <property type="gene ID" value="TraesCLE_scaffold_118054_01G000300"/>
</dbReference>
<dbReference type="Gramene" id="TraesLDM1B03G00184580.1">
    <property type="protein sequence ID" value="TraesLDM1B03G00184580.1.CDS1"/>
    <property type="gene ID" value="TraesLDM1B03G00184580"/>
</dbReference>
<dbReference type="Gramene" id="TraesPARA_EIv1.0_0104410.1">
    <property type="protein sequence ID" value="TraesPARA_EIv1.0_0104410.1.CDS1"/>
    <property type="gene ID" value="TraesPARA_EIv1.0_0104410"/>
</dbReference>
<dbReference type="Gramene" id="TraesROB_scaffold_021975_01G000300.1">
    <property type="protein sequence ID" value="TraesROB_scaffold_021975_01G000300.1"/>
    <property type="gene ID" value="TraesROB_scaffold_021975_01G000300"/>
</dbReference>
<dbReference type="Gramene" id="TraesSTA1B03G00182970.1">
    <property type="protein sequence ID" value="TraesSTA1B03G00182970.1.CDS1"/>
    <property type="gene ID" value="TraesSTA1B03G00182970"/>
</dbReference>
<dbReference type="Gramene" id="TraesSYM1B03G00188620.1">
    <property type="protein sequence ID" value="TraesSYM1B03G00188620.1.CDS1"/>
    <property type="gene ID" value="TraesSYM1B03G00188620"/>
</dbReference>
<dbReference type="Proteomes" id="UP000019116">
    <property type="component" value="Unplaced"/>
</dbReference>
<dbReference type="ExpressionAtlas" id="P21292">
    <property type="expression patterns" value="baseline and differential"/>
</dbReference>
<dbReference type="GO" id="GO:0045735">
    <property type="term" value="F:nutrient reservoir activity"/>
    <property type="evidence" value="ECO:0007669"/>
    <property type="project" value="UniProtKB-KW"/>
</dbReference>
<dbReference type="CDD" id="cd00261">
    <property type="entry name" value="AAI_SS"/>
    <property type="match status" value="1"/>
</dbReference>
<dbReference type="Gene3D" id="1.10.110.10">
    <property type="entry name" value="Plant lipid-transfer and hydrophobic proteins"/>
    <property type="match status" value="1"/>
</dbReference>
<dbReference type="InterPro" id="IPR036312">
    <property type="entry name" value="Bifun_inhib/LTP/seed_sf"/>
</dbReference>
<dbReference type="InterPro" id="IPR016140">
    <property type="entry name" value="Bifunc_inhib/LTP/seed_store"/>
</dbReference>
<dbReference type="InterPro" id="IPR001954">
    <property type="entry name" value="Glia_glutenin"/>
</dbReference>
<dbReference type="PANTHER" id="PTHR33454:SF16">
    <property type="entry name" value="GAMMA-GLIADIN"/>
    <property type="match status" value="1"/>
</dbReference>
<dbReference type="PANTHER" id="PTHR33454">
    <property type="entry name" value="PROLAMIN PPROL 14P"/>
    <property type="match status" value="1"/>
</dbReference>
<dbReference type="Pfam" id="PF13016">
    <property type="entry name" value="Gliadin"/>
    <property type="match status" value="1"/>
</dbReference>
<dbReference type="PRINTS" id="PR00208">
    <property type="entry name" value="GLIADGLUTEN"/>
</dbReference>
<dbReference type="PRINTS" id="PR00209">
    <property type="entry name" value="GLIADIN"/>
</dbReference>
<dbReference type="SMART" id="SM00499">
    <property type="entry name" value="AAI"/>
    <property type="match status" value="1"/>
</dbReference>
<dbReference type="SUPFAM" id="SSF47699">
    <property type="entry name" value="Bifunctional inhibitor/lipid-transfer protein/seed storage 2S albumin"/>
    <property type="match status" value="1"/>
</dbReference>
<name>GDBX_WHEAT</name>
<evidence type="ECO:0000256" key="1">
    <source>
        <dbReference type="SAM" id="MobiDB-lite"/>
    </source>
</evidence>
<evidence type="ECO:0000305" key="2"/>
<protein>
    <recommendedName>
        <fullName>Gamma-gliadin</fullName>
    </recommendedName>
</protein>
<accession>P21292</accession>
<reference key="1">
    <citation type="journal article" date="1988" name="Plant Sci.">
        <title>Nucleotide sequence of a gamma gliadin gene: comparisons with other gamma gliadin sequences show the structure of gamma gliadin genes and the general primary structure of gamma gliadins.</title>
        <authorList>
            <person name="Scheets K."/>
            <person name="Hedgcoth C."/>
        </authorList>
    </citation>
    <scope>NUCLEOTIDE SEQUENCE [GENOMIC DNA]</scope>
    <source>
        <strain>cv. Yamhill</strain>
    </source>
</reference>
<sequence>MKTLLILTILAMATTIATANMQVDPSGQVQWPQQQPFPQPQQPFCQQPQRTIPQPHQTFHHQPQQTFPQPQQTYPHQPQQQFPQTQQPQQPFPQPQQTFPQQPQLPFPQQPQQPFPQPQQPQQPFPQSQQPQQPFPQPQQQFPQPQQPQQSFPQQQQPAIQSFLQQQMNPCKNFLLQQCNHVSLVSSLVSIILPRSDCQVMQQQCCQQLAQIPQQLQCAAIHSVAHSIIMQQEQQQGVPILRPLFQLAQGLGIIQPQQPAQLEGIRSLVLKTLPTMCNVYVPPDCSTINVPYANIDAGIGGQ</sequence>
<proteinExistence type="inferred from homology"/>
<feature type="signal peptide">
    <location>
        <begin position="1"/>
        <end position="19"/>
    </location>
</feature>
<feature type="chain" id="PRO_0000032280" description="Gamma-gliadin">
    <location>
        <begin position="20"/>
        <end position="302"/>
    </location>
</feature>
<feature type="region of interest" description="Disordered" evidence="1">
    <location>
        <begin position="27"/>
        <end position="159"/>
    </location>
</feature>
<feature type="compositionally biased region" description="Low complexity" evidence="1">
    <location>
        <begin position="42"/>
        <end position="102"/>
    </location>
</feature>
<feature type="compositionally biased region" description="Pro residues" evidence="1">
    <location>
        <begin position="103"/>
        <end position="124"/>
    </location>
</feature>
<feature type="compositionally biased region" description="Low complexity" evidence="1">
    <location>
        <begin position="125"/>
        <end position="159"/>
    </location>
</feature>
<comment type="function">
    <text>Gliadin is the major seed storage protein in wheat.</text>
</comment>
<comment type="miscellaneous">
    <text>The gamma-gliadins can be divided into 3 homology classes. Sequence divergence between the classes is due to single-base substitutions and to duplications or deletions within or near direct repeats.</text>
</comment>
<comment type="similarity">
    <text evidence="2">Belongs to the gliadin/glutenin family.</text>
</comment>
<organism>
    <name type="scientific">Triticum aestivum</name>
    <name type="common">Wheat</name>
    <dbReference type="NCBI Taxonomy" id="4565"/>
    <lineage>
        <taxon>Eukaryota</taxon>
        <taxon>Viridiplantae</taxon>
        <taxon>Streptophyta</taxon>
        <taxon>Embryophyta</taxon>
        <taxon>Tracheophyta</taxon>
        <taxon>Spermatophyta</taxon>
        <taxon>Magnoliopsida</taxon>
        <taxon>Liliopsida</taxon>
        <taxon>Poales</taxon>
        <taxon>Poaceae</taxon>
        <taxon>BOP clade</taxon>
        <taxon>Pooideae</taxon>
        <taxon>Triticodae</taxon>
        <taxon>Triticeae</taxon>
        <taxon>Triticinae</taxon>
        <taxon>Triticum</taxon>
    </lineage>
</organism>
<keyword id="KW-1185">Reference proteome</keyword>
<keyword id="KW-0677">Repeat</keyword>
<keyword id="KW-0708">Seed storage protein</keyword>
<keyword id="KW-0732">Signal</keyword>
<keyword id="KW-0758">Storage protein</keyword>